<dbReference type="EC" id="2.1.1.228" evidence="1"/>
<dbReference type="EMBL" id="CP000887">
    <property type="protein sequence ID" value="ACD73277.1"/>
    <property type="molecule type" value="Genomic_DNA"/>
</dbReference>
<dbReference type="RefSeq" id="WP_002964982.1">
    <property type="nucleotide sequence ID" value="NC_010742.1"/>
</dbReference>
<dbReference type="SMR" id="B2S868"/>
<dbReference type="GeneID" id="97534799"/>
<dbReference type="KEGG" id="bmc:BAbS19_I17950"/>
<dbReference type="HOGENOM" id="CLU_047363_0_1_5"/>
<dbReference type="Proteomes" id="UP000002565">
    <property type="component" value="Chromosome 1"/>
</dbReference>
<dbReference type="GO" id="GO:0005829">
    <property type="term" value="C:cytosol"/>
    <property type="evidence" value="ECO:0007669"/>
    <property type="project" value="TreeGrafter"/>
</dbReference>
<dbReference type="GO" id="GO:0052906">
    <property type="term" value="F:tRNA (guanine(37)-N1)-methyltransferase activity"/>
    <property type="evidence" value="ECO:0007669"/>
    <property type="project" value="UniProtKB-UniRule"/>
</dbReference>
<dbReference type="GO" id="GO:0002939">
    <property type="term" value="P:tRNA N1-guanine methylation"/>
    <property type="evidence" value="ECO:0007669"/>
    <property type="project" value="TreeGrafter"/>
</dbReference>
<dbReference type="CDD" id="cd18080">
    <property type="entry name" value="TrmD-like"/>
    <property type="match status" value="1"/>
</dbReference>
<dbReference type="Gene3D" id="3.40.1280.10">
    <property type="match status" value="1"/>
</dbReference>
<dbReference type="Gene3D" id="1.10.1270.20">
    <property type="entry name" value="tRNA(m1g37)methyltransferase, domain 2"/>
    <property type="match status" value="1"/>
</dbReference>
<dbReference type="HAMAP" id="MF_00605">
    <property type="entry name" value="TrmD"/>
    <property type="match status" value="1"/>
</dbReference>
<dbReference type="InterPro" id="IPR029028">
    <property type="entry name" value="Alpha/beta_knot_MTases"/>
</dbReference>
<dbReference type="InterPro" id="IPR023148">
    <property type="entry name" value="tRNA_m1G_MeTrfase_C_sf"/>
</dbReference>
<dbReference type="InterPro" id="IPR002649">
    <property type="entry name" value="tRNA_m1G_MeTrfase_TrmD"/>
</dbReference>
<dbReference type="InterPro" id="IPR029026">
    <property type="entry name" value="tRNA_m1G_MTases_N"/>
</dbReference>
<dbReference type="InterPro" id="IPR016009">
    <property type="entry name" value="tRNA_MeTrfase_TRMD/TRM10"/>
</dbReference>
<dbReference type="NCBIfam" id="NF000648">
    <property type="entry name" value="PRK00026.1"/>
    <property type="match status" value="1"/>
</dbReference>
<dbReference type="NCBIfam" id="TIGR00088">
    <property type="entry name" value="trmD"/>
    <property type="match status" value="1"/>
</dbReference>
<dbReference type="PANTHER" id="PTHR46417">
    <property type="entry name" value="TRNA (GUANINE-N(1)-)-METHYLTRANSFERASE"/>
    <property type="match status" value="1"/>
</dbReference>
<dbReference type="PANTHER" id="PTHR46417:SF1">
    <property type="entry name" value="TRNA (GUANINE-N(1)-)-METHYLTRANSFERASE"/>
    <property type="match status" value="1"/>
</dbReference>
<dbReference type="Pfam" id="PF01746">
    <property type="entry name" value="tRNA_m1G_MT"/>
    <property type="match status" value="1"/>
</dbReference>
<dbReference type="PIRSF" id="PIRSF000386">
    <property type="entry name" value="tRNA_mtase"/>
    <property type="match status" value="1"/>
</dbReference>
<dbReference type="SUPFAM" id="SSF75217">
    <property type="entry name" value="alpha/beta knot"/>
    <property type="match status" value="1"/>
</dbReference>
<reference key="1">
    <citation type="journal article" date="2008" name="PLoS ONE">
        <title>Genome sequence of Brucella abortus vaccine strain S19 compared to virulent strains yields candidate virulence genes.</title>
        <authorList>
            <person name="Crasta O.R."/>
            <person name="Folkerts O."/>
            <person name="Fei Z."/>
            <person name="Mane S.P."/>
            <person name="Evans C."/>
            <person name="Martino-Catt S."/>
            <person name="Bricker B."/>
            <person name="Yu G."/>
            <person name="Du L."/>
            <person name="Sobral B.W."/>
        </authorList>
    </citation>
    <scope>NUCLEOTIDE SEQUENCE [LARGE SCALE GENOMIC DNA]</scope>
    <source>
        <strain>S19</strain>
    </source>
</reference>
<keyword id="KW-0963">Cytoplasm</keyword>
<keyword id="KW-0489">Methyltransferase</keyword>
<keyword id="KW-0949">S-adenosyl-L-methionine</keyword>
<keyword id="KW-0808">Transferase</keyword>
<keyword id="KW-0819">tRNA processing</keyword>
<comment type="function">
    <text evidence="1">Specifically methylates guanosine-37 in various tRNAs.</text>
</comment>
<comment type="catalytic activity">
    <reaction evidence="1">
        <text>guanosine(37) in tRNA + S-adenosyl-L-methionine = N(1)-methylguanosine(37) in tRNA + S-adenosyl-L-homocysteine + H(+)</text>
        <dbReference type="Rhea" id="RHEA:36899"/>
        <dbReference type="Rhea" id="RHEA-COMP:10145"/>
        <dbReference type="Rhea" id="RHEA-COMP:10147"/>
        <dbReference type="ChEBI" id="CHEBI:15378"/>
        <dbReference type="ChEBI" id="CHEBI:57856"/>
        <dbReference type="ChEBI" id="CHEBI:59789"/>
        <dbReference type="ChEBI" id="CHEBI:73542"/>
        <dbReference type="ChEBI" id="CHEBI:74269"/>
        <dbReference type="EC" id="2.1.1.228"/>
    </reaction>
</comment>
<comment type="subunit">
    <text evidence="1">Homodimer.</text>
</comment>
<comment type="subcellular location">
    <subcellularLocation>
        <location evidence="1">Cytoplasm</location>
    </subcellularLocation>
</comment>
<comment type="similarity">
    <text evidence="1">Belongs to the RNA methyltransferase TrmD family.</text>
</comment>
<sequence>MTDLPEKEGGRFHASVLTLYPEMFPGPLGISLAGKALAEGKWQLDTVQIRDFAEGRHRMVDDTPSGGGAGMVMKADVVARALDSVDDGRPMLLMTPRGKPLTQERVRALADGAGAIILCGRFEGVDERVIEGRNLEEISIGDYILSGGETAAIVLLDAVVRLLPGVMGNRESGETESFETGLLEHPHYTRPQEWEGRAIPDILTSGNHGAIDKWRLEQAERITRERRPDLWEAYCKNRRKIGGQ</sequence>
<protein>
    <recommendedName>
        <fullName evidence="1">tRNA (guanine-N(1)-)-methyltransferase</fullName>
        <ecNumber evidence="1">2.1.1.228</ecNumber>
    </recommendedName>
    <alternativeName>
        <fullName evidence="1">M1G-methyltransferase</fullName>
    </alternativeName>
    <alternativeName>
        <fullName evidence="1">tRNA [GM37] methyltransferase</fullName>
    </alternativeName>
</protein>
<feature type="chain" id="PRO_1000130140" description="tRNA (guanine-N(1)-)-methyltransferase">
    <location>
        <begin position="1"/>
        <end position="244"/>
    </location>
</feature>
<feature type="binding site" evidence="1">
    <location>
        <position position="120"/>
    </location>
    <ligand>
        <name>S-adenosyl-L-methionine</name>
        <dbReference type="ChEBI" id="CHEBI:59789"/>
    </ligand>
</feature>
<feature type="binding site" evidence="1">
    <location>
        <begin position="140"/>
        <end position="145"/>
    </location>
    <ligand>
        <name>S-adenosyl-L-methionine</name>
        <dbReference type="ChEBI" id="CHEBI:59789"/>
    </ligand>
</feature>
<accession>B2S868</accession>
<name>TRMD_BRUA1</name>
<evidence type="ECO:0000255" key="1">
    <source>
        <dbReference type="HAMAP-Rule" id="MF_00605"/>
    </source>
</evidence>
<proteinExistence type="inferred from homology"/>
<gene>
    <name evidence="1" type="primary">trmD</name>
    <name type="ordered locus">BAbS19_I17950</name>
</gene>
<organism>
    <name type="scientific">Brucella abortus (strain S19)</name>
    <dbReference type="NCBI Taxonomy" id="430066"/>
    <lineage>
        <taxon>Bacteria</taxon>
        <taxon>Pseudomonadati</taxon>
        <taxon>Pseudomonadota</taxon>
        <taxon>Alphaproteobacteria</taxon>
        <taxon>Hyphomicrobiales</taxon>
        <taxon>Brucellaceae</taxon>
        <taxon>Brucella/Ochrobactrum group</taxon>
        <taxon>Brucella</taxon>
    </lineage>
</organism>